<feature type="chain" id="PRO_0000281491" description="Zinc import ATP-binding protein ZnuC">
    <location>
        <begin position="1"/>
        <end position="259"/>
    </location>
</feature>
<feature type="domain" description="ABC transporter" evidence="1">
    <location>
        <begin position="6"/>
        <end position="223"/>
    </location>
</feature>
<feature type="region of interest" description="Disordered" evidence="2">
    <location>
        <begin position="230"/>
        <end position="259"/>
    </location>
</feature>
<feature type="compositionally biased region" description="Basic and acidic residues" evidence="2">
    <location>
        <begin position="233"/>
        <end position="259"/>
    </location>
</feature>
<feature type="binding site" evidence="1">
    <location>
        <begin position="38"/>
        <end position="45"/>
    </location>
    <ligand>
        <name>ATP</name>
        <dbReference type="ChEBI" id="CHEBI:30616"/>
    </ligand>
</feature>
<keyword id="KW-0067">ATP-binding</keyword>
<keyword id="KW-0997">Cell inner membrane</keyword>
<keyword id="KW-1003">Cell membrane</keyword>
<keyword id="KW-0406">Ion transport</keyword>
<keyword id="KW-0472">Membrane</keyword>
<keyword id="KW-0547">Nucleotide-binding</keyword>
<keyword id="KW-1185">Reference proteome</keyword>
<keyword id="KW-1278">Translocase</keyword>
<keyword id="KW-0813">Transport</keyword>
<keyword id="KW-0862">Zinc</keyword>
<keyword id="KW-0864">Zinc transport</keyword>
<proteinExistence type="inferred from homology"/>
<name>ZNUC_ALCBS</name>
<gene>
    <name evidence="1" type="primary">znuC</name>
    <name type="ordered locus">ABO_0156</name>
</gene>
<organism>
    <name type="scientific">Alcanivorax borkumensis (strain ATCC 700651 / DSM 11573 / NCIMB 13689 / SK2)</name>
    <dbReference type="NCBI Taxonomy" id="393595"/>
    <lineage>
        <taxon>Bacteria</taxon>
        <taxon>Pseudomonadati</taxon>
        <taxon>Pseudomonadota</taxon>
        <taxon>Gammaproteobacteria</taxon>
        <taxon>Oceanospirillales</taxon>
        <taxon>Alcanivoracaceae</taxon>
        <taxon>Alcanivorax</taxon>
    </lineage>
</organism>
<sequence>MPEPLVTVQSVSVTLGGNAVLSDVSLSLAPGRITTLIGPNGAGKSTLARLVLGLVQPDSNHGTVIRRKGLRVGYMPQHIKIDDSLPLTVDRFLWLAAPGPTASRRAALERAGVAHLRRRGVQQLSGGEMQRVLLARALLRKPDLLVLDEPAQGVDVAGQNALYGLLKTVRDELGCAILLISHDLHLVMAATDEVICLQRHVCCSGSPESVSRDPAYHELFGPGAGTPNLALYTHDHDHDHDLHGNATHSHDHNGPCNHD</sequence>
<accession>Q0VTB6</accession>
<dbReference type="EC" id="7.2.2.20" evidence="1"/>
<dbReference type="EMBL" id="AM286690">
    <property type="protein sequence ID" value="CAL15604.1"/>
    <property type="molecule type" value="Genomic_DNA"/>
</dbReference>
<dbReference type="RefSeq" id="WP_011587453.1">
    <property type="nucleotide sequence ID" value="NC_008260.1"/>
</dbReference>
<dbReference type="SMR" id="Q0VTB6"/>
<dbReference type="STRING" id="393595.ABO_0156"/>
<dbReference type="KEGG" id="abo:ABO_0156"/>
<dbReference type="eggNOG" id="COG1121">
    <property type="taxonomic scope" value="Bacteria"/>
</dbReference>
<dbReference type="HOGENOM" id="CLU_000604_1_11_6"/>
<dbReference type="OrthoDB" id="9780942at2"/>
<dbReference type="Proteomes" id="UP000008871">
    <property type="component" value="Chromosome"/>
</dbReference>
<dbReference type="GO" id="GO:0005886">
    <property type="term" value="C:plasma membrane"/>
    <property type="evidence" value="ECO:0007669"/>
    <property type="project" value="UniProtKB-SubCell"/>
</dbReference>
<dbReference type="GO" id="GO:0015633">
    <property type="term" value="F:ABC-type zinc transporter activity"/>
    <property type="evidence" value="ECO:0007669"/>
    <property type="project" value="UniProtKB-EC"/>
</dbReference>
<dbReference type="GO" id="GO:0005524">
    <property type="term" value="F:ATP binding"/>
    <property type="evidence" value="ECO:0007669"/>
    <property type="project" value="UniProtKB-KW"/>
</dbReference>
<dbReference type="GO" id="GO:0016887">
    <property type="term" value="F:ATP hydrolysis activity"/>
    <property type="evidence" value="ECO:0007669"/>
    <property type="project" value="InterPro"/>
</dbReference>
<dbReference type="GO" id="GO:0010043">
    <property type="term" value="P:response to zinc ion"/>
    <property type="evidence" value="ECO:0007669"/>
    <property type="project" value="TreeGrafter"/>
</dbReference>
<dbReference type="FunFam" id="3.40.50.300:FF:000392">
    <property type="entry name" value="Zinc import ATP-binding protein ZnuC"/>
    <property type="match status" value="1"/>
</dbReference>
<dbReference type="Gene3D" id="3.40.50.300">
    <property type="entry name" value="P-loop containing nucleotide triphosphate hydrolases"/>
    <property type="match status" value="1"/>
</dbReference>
<dbReference type="InterPro" id="IPR003593">
    <property type="entry name" value="AAA+_ATPase"/>
</dbReference>
<dbReference type="InterPro" id="IPR003439">
    <property type="entry name" value="ABC_transporter-like_ATP-bd"/>
</dbReference>
<dbReference type="InterPro" id="IPR017871">
    <property type="entry name" value="ABC_transporter-like_CS"/>
</dbReference>
<dbReference type="InterPro" id="IPR050153">
    <property type="entry name" value="Metal_Ion_Import_ABC"/>
</dbReference>
<dbReference type="InterPro" id="IPR027417">
    <property type="entry name" value="P-loop_NTPase"/>
</dbReference>
<dbReference type="NCBIfam" id="NF007090">
    <property type="entry name" value="PRK09544.1"/>
    <property type="match status" value="1"/>
</dbReference>
<dbReference type="PANTHER" id="PTHR42734">
    <property type="entry name" value="METAL TRANSPORT SYSTEM ATP-BINDING PROTEIN TM_0124-RELATED"/>
    <property type="match status" value="1"/>
</dbReference>
<dbReference type="PANTHER" id="PTHR42734:SF9">
    <property type="entry name" value="ZINC IMPORT ATP-BINDING PROTEIN ZNUC"/>
    <property type="match status" value="1"/>
</dbReference>
<dbReference type="Pfam" id="PF00005">
    <property type="entry name" value="ABC_tran"/>
    <property type="match status" value="1"/>
</dbReference>
<dbReference type="SMART" id="SM00382">
    <property type="entry name" value="AAA"/>
    <property type="match status" value="1"/>
</dbReference>
<dbReference type="SUPFAM" id="SSF52540">
    <property type="entry name" value="P-loop containing nucleoside triphosphate hydrolases"/>
    <property type="match status" value="1"/>
</dbReference>
<dbReference type="PROSITE" id="PS00211">
    <property type="entry name" value="ABC_TRANSPORTER_1"/>
    <property type="match status" value="1"/>
</dbReference>
<dbReference type="PROSITE" id="PS50893">
    <property type="entry name" value="ABC_TRANSPORTER_2"/>
    <property type="match status" value="1"/>
</dbReference>
<dbReference type="PROSITE" id="PS51298">
    <property type="entry name" value="ZNUC"/>
    <property type="match status" value="1"/>
</dbReference>
<protein>
    <recommendedName>
        <fullName evidence="1">Zinc import ATP-binding protein ZnuC</fullName>
        <ecNumber evidence="1">7.2.2.20</ecNumber>
    </recommendedName>
</protein>
<evidence type="ECO:0000255" key="1">
    <source>
        <dbReference type="HAMAP-Rule" id="MF_01725"/>
    </source>
</evidence>
<evidence type="ECO:0000256" key="2">
    <source>
        <dbReference type="SAM" id="MobiDB-lite"/>
    </source>
</evidence>
<comment type="function">
    <text evidence="1">Part of the ABC transporter complex ZnuABC involved in zinc import. Responsible for energy coupling to the transport system.</text>
</comment>
<comment type="catalytic activity">
    <reaction evidence="1">
        <text>Zn(2+)(out) + ATP(in) + H2O(in) = Zn(2+)(in) + ADP(in) + phosphate(in) + H(+)(in)</text>
        <dbReference type="Rhea" id="RHEA:29795"/>
        <dbReference type="ChEBI" id="CHEBI:15377"/>
        <dbReference type="ChEBI" id="CHEBI:15378"/>
        <dbReference type="ChEBI" id="CHEBI:29105"/>
        <dbReference type="ChEBI" id="CHEBI:30616"/>
        <dbReference type="ChEBI" id="CHEBI:43474"/>
        <dbReference type="ChEBI" id="CHEBI:456216"/>
        <dbReference type="EC" id="7.2.2.20"/>
    </reaction>
</comment>
<comment type="subunit">
    <text evidence="1">The complex is composed of two ATP-binding proteins (ZnuC), two transmembrane proteins (ZnuB) and a solute-binding protein (ZnuA).</text>
</comment>
<comment type="subcellular location">
    <subcellularLocation>
        <location evidence="1">Cell inner membrane</location>
        <topology evidence="1">Peripheral membrane protein</topology>
    </subcellularLocation>
</comment>
<comment type="similarity">
    <text evidence="1">Belongs to the ABC transporter superfamily. Zinc importer (TC 3.A.1.15.5) family.</text>
</comment>
<reference key="1">
    <citation type="journal article" date="2006" name="Nat. Biotechnol.">
        <title>Genome sequence of the ubiquitous hydrocarbon-degrading marine bacterium Alcanivorax borkumensis.</title>
        <authorList>
            <person name="Schneiker S."/>
            <person name="Martins dos Santos V.A.P."/>
            <person name="Bartels D."/>
            <person name="Bekel T."/>
            <person name="Brecht M."/>
            <person name="Buhrmester J."/>
            <person name="Chernikova T.N."/>
            <person name="Denaro R."/>
            <person name="Ferrer M."/>
            <person name="Gertler C."/>
            <person name="Goesmann A."/>
            <person name="Golyshina O.V."/>
            <person name="Kaminski F."/>
            <person name="Khachane A.N."/>
            <person name="Lang S."/>
            <person name="Linke B."/>
            <person name="McHardy A.C."/>
            <person name="Meyer F."/>
            <person name="Nechitaylo T."/>
            <person name="Puehler A."/>
            <person name="Regenhardt D."/>
            <person name="Rupp O."/>
            <person name="Sabirova J.S."/>
            <person name="Selbitschka W."/>
            <person name="Yakimov M.M."/>
            <person name="Timmis K.N."/>
            <person name="Vorhoelter F.-J."/>
            <person name="Weidner S."/>
            <person name="Kaiser O."/>
            <person name="Golyshin P.N."/>
        </authorList>
    </citation>
    <scope>NUCLEOTIDE SEQUENCE [LARGE SCALE GENOMIC DNA]</scope>
    <source>
        <strain>ATCC 700651 / DSM 11573 / NCIMB 13689 / SK2</strain>
    </source>
</reference>